<evidence type="ECO:0000250" key="1"/>
<evidence type="ECO:0000305" key="2"/>
<comment type="function">
    <text evidence="1">The beta subunit is responsible for the synthesis of L-tryptophan from indole and L-serine.</text>
</comment>
<comment type="catalytic activity">
    <reaction>
        <text>(1S,2R)-1-C-(indol-3-yl)glycerol 3-phosphate + L-serine = D-glyceraldehyde 3-phosphate + L-tryptophan + H2O</text>
        <dbReference type="Rhea" id="RHEA:10532"/>
        <dbReference type="ChEBI" id="CHEBI:15377"/>
        <dbReference type="ChEBI" id="CHEBI:33384"/>
        <dbReference type="ChEBI" id="CHEBI:57912"/>
        <dbReference type="ChEBI" id="CHEBI:58866"/>
        <dbReference type="ChEBI" id="CHEBI:59776"/>
        <dbReference type="EC" id="4.2.1.20"/>
    </reaction>
</comment>
<comment type="cofactor">
    <cofactor evidence="1">
        <name>pyridoxal 5'-phosphate</name>
        <dbReference type="ChEBI" id="CHEBI:597326"/>
    </cofactor>
</comment>
<comment type="pathway">
    <text>Amino-acid biosynthesis; L-tryptophan biosynthesis; L-tryptophan from chorismate: step 5/5.</text>
</comment>
<comment type="subunit">
    <text evidence="1">Tetramer of two alpha and two beta chains.</text>
</comment>
<comment type="similarity">
    <text evidence="2">Belongs to the TrpB family.</text>
</comment>
<proteinExistence type="inferred from homology"/>
<feature type="chain" id="PRO_0000099057" description="Tryptophan synthase beta chain 1">
    <location>
        <begin position="1"/>
        <end position="422"/>
    </location>
</feature>
<feature type="modified residue" description="N6-(pyridoxal phosphate)lysine" evidence="1">
    <location>
        <position position="107"/>
    </location>
</feature>
<name>TRPB1_SULTO</name>
<dbReference type="EC" id="4.2.1.20"/>
<dbReference type="EMBL" id="BA000023">
    <property type="protein sequence ID" value="BAB66274.1"/>
    <property type="molecule type" value="Genomic_DNA"/>
</dbReference>
<dbReference type="RefSeq" id="WP_010979252.1">
    <property type="nucleotide sequence ID" value="NC_003106.2"/>
</dbReference>
<dbReference type="SMR" id="Q971Z5"/>
<dbReference type="STRING" id="273063.STK_12330"/>
<dbReference type="GeneID" id="1459231"/>
<dbReference type="KEGG" id="sto:STK_12330"/>
<dbReference type="PATRIC" id="fig|273063.9.peg.1392"/>
<dbReference type="eggNOG" id="arCOG01432">
    <property type="taxonomic scope" value="Archaea"/>
</dbReference>
<dbReference type="OrthoDB" id="371827at2157"/>
<dbReference type="UniPathway" id="UPA00035">
    <property type="reaction ID" value="UER00044"/>
</dbReference>
<dbReference type="Proteomes" id="UP000001015">
    <property type="component" value="Chromosome"/>
</dbReference>
<dbReference type="GO" id="GO:0005737">
    <property type="term" value="C:cytoplasm"/>
    <property type="evidence" value="ECO:0007669"/>
    <property type="project" value="TreeGrafter"/>
</dbReference>
<dbReference type="GO" id="GO:0052684">
    <property type="term" value="F:L-serine hydro-lyase (adding indole, L-tryptophan-forming) activity"/>
    <property type="evidence" value="ECO:0007669"/>
    <property type="project" value="TreeGrafter"/>
</dbReference>
<dbReference type="GO" id="GO:0030170">
    <property type="term" value="F:pyridoxal phosphate binding"/>
    <property type="evidence" value="ECO:0007669"/>
    <property type="project" value="InterPro"/>
</dbReference>
<dbReference type="GO" id="GO:0004834">
    <property type="term" value="F:tryptophan synthase activity"/>
    <property type="evidence" value="ECO:0007669"/>
    <property type="project" value="UniProtKB-UniRule"/>
</dbReference>
<dbReference type="CDD" id="cd06446">
    <property type="entry name" value="Trp-synth_B"/>
    <property type="match status" value="1"/>
</dbReference>
<dbReference type="Gene3D" id="3.40.50.1100">
    <property type="match status" value="2"/>
</dbReference>
<dbReference type="HAMAP" id="MF_00133">
    <property type="entry name" value="Trp_synth_beta"/>
    <property type="match status" value="1"/>
</dbReference>
<dbReference type="InterPro" id="IPR006316">
    <property type="entry name" value="Trp_synth_b-like"/>
</dbReference>
<dbReference type="InterPro" id="IPR006653">
    <property type="entry name" value="Trp_synth_b_CS"/>
</dbReference>
<dbReference type="InterPro" id="IPR006654">
    <property type="entry name" value="Trp_synth_beta"/>
</dbReference>
<dbReference type="InterPro" id="IPR023026">
    <property type="entry name" value="Trp_synth_beta/beta-like"/>
</dbReference>
<dbReference type="InterPro" id="IPR001926">
    <property type="entry name" value="TrpB-like_PALP"/>
</dbReference>
<dbReference type="InterPro" id="IPR036052">
    <property type="entry name" value="TrpB-like_PALP_sf"/>
</dbReference>
<dbReference type="NCBIfam" id="NF009057">
    <property type="entry name" value="PRK12391.1"/>
    <property type="match status" value="1"/>
</dbReference>
<dbReference type="NCBIfam" id="TIGR01415">
    <property type="entry name" value="trpB_rel"/>
    <property type="match status" value="1"/>
</dbReference>
<dbReference type="PANTHER" id="PTHR48077:SF6">
    <property type="entry name" value="TRYPTOPHAN SYNTHASE"/>
    <property type="match status" value="1"/>
</dbReference>
<dbReference type="PANTHER" id="PTHR48077">
    <property type="entry name" value="TRYPTOPHAN SYNTHASE-RELATED"/>
    <property type="match status" value="1"/>
</dbReference>
<dbReference type="Pfam" id="PF00291">
    <property type="entry name" value="PALP"/>
    <property type="match status" value="1"/>
</dbReference>
<dbReference type="PIRSF" id="PIRSF001413">
    <property type="entry name" value="Trp_syn_beta"/>
    <property type="match status" value="1"/>
</dbReference>
<dbReference type="PIRSF" id="PIRSF500824">
    <property type="entry name" value="TrpB_prok"/>
    <property type="match status" value="1"/>
</dbReference>
<dbReference type="SUPFAM" id="SSF53686">
    <property type="entry name" value="Tryptophan synthase beta subunit-like PLP-dependent enzymes"/>
    <property type="match status" value="1"/>
</dbReference>
<dbReference type="PROSITE" id="PS00168">
    <property type="entry name" value="TRP_SYNTHASE_BETA"/>
    <property type="match status" value="1"/>
</dbReference>
<protein>
    <recommendedName>
        <fullName>Tryptophan synthase beta chain 1</fullName>
        <ecNumber>4.2.1.20</ecNumber>
    </recommendedName>
</protein>
<reference key="1">
    <citation type="journal article" date="2001" name="DNA Res.">
        <title>Complete genome sequence of an aerobic thermoacidophilic Crenarchaeon, Sulfolobus tokodaii strain7.</title>
        <authorList>
            <person name="Kawarabayasi Y."/>
            <person name="Hino Y."/>
            <person name="Horikawa H."/>
            <person name="Jin-no K."/>
            <person name="Takahashi M."/>
            <person name="Sekine M."/>
            <person name="Baba S."/>
            <person name="Ankai A."/>
            <person name="Kosugi H."/>
            <person name="Hosoyama A."/>
            <person name="Fukui S."/>
            <person name="Nagai Y."/>
            <person name="Nishijima K."/>
            <person name="Otsuka R."/>
            <person name="Nakazawa H."/>
            <person name="Takamiya M."/>
            <person name="Kato Y."/>
            <person name="Yoshizawa T."/>
            <person name="Tanaka T."/>
            <person name="Kudoh Y."/>
            <person name="Yamazaki J."/>
            <person name="Kushida N."/>
            <person name="Oguchi A."/>
            <person name="Aoki K."/>
            <person name="Masuda S."/>
            <person name="Yanagii M."/>
            <person name="Nishimura M."/>
            <person name="Yamagishi A."/>
            <person name="Oshima T."/>
            <person name="Kikuchi H."/>
        </authorList>
    </citation>
    <scope>NUCLEOTIDE SEQUENCE [LARGE SCALE GENOMIC DNA]</scope>
    <source>
        <strain>DSM 16993 / JCM 10545 / NBRC 100140 / 7</strain>
    </source>
</reference>
<accession>Q971Z5</accession>
<gene>
    <name type="primary">trpB1</name>
    <name type="ordered locus">STK_12330</name>
</gene>
<sequence length="422" mass="47166">MVNKDLIPKYWYNIIPDLPKPLPPPRDPPDAEFSRIELLKKILPKEVLRQQFTIERFIKIPEEVRDRYAIIGRPTPLMRAKRLEEYLDTPAKIYFKFEGATPTGSHKINTAVPQAYFAAEEGISHVVTETGAGQWGTAVALAASMYDLSSTIFMVRVSYEQKPMRKTIMELYGGKVYASPTDLTEFGRKILKENPNHPGSLGIAMSEAIEFALNHNFRYLVGSVLDVVLLHQSVIGMEAIAQLDELGEEPDILIGCVGGGSNFGGFTYPFIGAKKGKKYIAVGAAEIPKFSTGKYEYDYPDTAGLLPLVKMITLGKDYVPPPIYAGGLRYHGVAPTLSLLIKEKIVEWREYKEEEIYEAAKIFMKTQGIVPAPESAHAIKAVIDEALKAKTEKERRVIVFNLSGHGLLDLGNYESIRRRVEK</sequence>
<keyword id="KW-0028">Amino-acid biosynthesis</keyword>
<keyword id="KW-0057">Aromatic amino acid biosynthesis</keyword>
<keyword id="KW-0456">Lyase</keyword>
<keyword id="KW-0663">Pyridoxal phosphate</keyword>
<keyword id="KW-1185">Reference proteome</keyword>
<keyword id="KW-0822">Tryptophan biosynthesis</keyword>
<organism>
    <name type="scientific">Sulfurisphaera tokodaii (strain DSM 16993 / JCM 10545 / NBRC 100140 / 7)</name>
    <name type="common">Sulfolobus tokodaii</name>
    <dbReference type="NCBI Taxonomy" id="273063"/>
    <lineage>
        <taxon>Archaea</taxon>
        <taxon>Thermoproteota</taxon>
        <taxon>Thermoprotei</taxon>
        <taxon>Sulfolobales</taxon>
        <taxon>Sulfolobaceae</taxon>
        <taxon>Sulfurisphaera</taxon>
    </lineage>
</organism>